<evidence type="ECO:0000255" key="1">
    <source>
        <dbReference type="HAMAP-Rule" id="MF_00110"/>
    </source>
</evidence>
<comment type="function">
    <text evidence="1">Catalyzes the conversion of 3-deoxy-D-arabino-heptulosonate 7-phosphate (DAHP) to dehydroquinate (DHQ).</text>
</comment>
<comment type="catalytic activity">
    <reaction evidence="1">
        <text>7-phospho-2-dehydro-3-deoxy-D-arabino-heptonate = 3-dehydroquinate + phosphate</text>
        <dbReference type="Rhea" id="RHEA:21968"/>
        <dbReference type="ChEBI" id="CHEBI:32364"/>
        <dbReference type="ChEBI" id="CHEBI:43474"/>
        <dbReference type="ChEBI" id="CHEBI:58394"/>
        <dbReference type="EC" id="4.2.3.4"/>
    </reaction>
</comment>
<comment type="cofactor">
    <cofactor evidence="1">
        <name>NAD(+)</name>
        <dbReference type="ChEBI" id="CHEBI:57540"/>
    </cofactor>
</comment>
<comment type="cofactor">
    <cofactor evidence="1">
        <name>Co(2+)</name>
        <dbReference type="ChEBI" id="CHEBI:48828"/>
    </cofactor>
    <cofactor evidence="1">
        <name>Zn(2+)</name>
        <dbReference type="ChEBI" id="CHEBI:29105"/>
    </cofactor>
    <text evidence="1">Binds 1 divalent metal cation per subunit. Can use either Co(2+) or Zn(2+).</text>
</comment>
<comment type="pathway">
    <text evidence="1">Metabolic intermediate biosynthesis; chorismate biosynthesis; chorismate from D-erythrose 4-phosphate and phosphoenolpyruvate: step 2/7.</text>
</comment>
<comment type="subcellular location">
    <subcellularLocation>
        <location evidence="1">Cytoplasm</location>
    </subcellularLocation>
</comment>
<comment type="similarity">
    <text evidence="1">Belongs to the sugar phosphate cyclases superfamily. Dehydroquinate synthase family.</text>
</comment>
<feature type="chain" id="PRO_0000140741" description="3-dehydroquinate synthase">
    <location>
        <begin position="1"/>
        <end position="361"/>
    </location>
</feature>
<feature type="binding site" evidence="1">
    <location>
        <begin position="106"/>
        <end position="110"/>
    </location>
    <ligand>
        <name>NAD(+)</name>
        <dbReference type="ChEBI" id="CHEBI:57540"/>
    </ligand>
</feature>
<feature type="binding site" evidence="1">
    <location>
        <begin position="130"/>
        <end position="131"/>
    </location>
    <ligand>
        <name>NAD(+)</name>
        <dbReference type="ChEBI" id="CHEBI:57540"/>
    </ligand>
</feature>
<feature type="binding site" evidence="1">
    <location>
        <position position="143"/>
    </location>
    <ligand>
        <name>NAD(+)</name>
        <dbReference type="ChEBI" id="CHEBI:57540"/>
    </ligand>
</feature>
<feature type="binding site" evidence="1">
    <location>
        <position position="152"/>
    </location>
    <ligand>
        <name>NAD(+)</name>
        <dbReference type="ChEBI" id="CHEBI:57540"/>
    </ligand>
</feature>
<feature type="binding site" evidence="1">
    <location>
        <position position="185"/>
    </location>
    <ligand>
        <name>Zn(2+)</name>
        <dbReference type="ChEBI" id="CHEBI:29105"/>
    </ligand>
</feature>
<feature type="binding site" evidence="1">
    <location>
        <position position="247"/>
    </location>
    <ligand>
        <name>Zn(2+)</name>
        <dbReference type="ChEBI" id="CHEBI:29105"/>
    </ligand>
</feature>
<feature type="binding site" evidence="1">
    <location>
        <position position="264"/>
    </location>
    <ligand>
        <name>Zn(2+)</name>
        <dbReference type="ChEBI" id="CHEBI:29105"/>
    </ligand>
</feature>
<reference key="1">
    <citation type="journal article" date="2003" name="DNA Res.">
        <title>Complete genome structure of Gloeobacter violaceus PCC 7421, a cyanobacterium that lacks thylakoids.</title>
        <authorList>
            <person name="Nakamura Y."/>
            <person name="Kaneko T."/>
            <person name="Sato S."/>
            <person name="Mimuro M."/>
            <person name="Miyashita H."/>
            <person name="Tsuchiya T."/>
            <person name="Sasamoto S."/>
            <person name="Watanabe A."/>
            <person name="Kawashima K."/>
            <person name="Kishida Y."/>
            <person name="Kiyokawa C."/>
            <person name="Kohara M."/>
            <person name="Matsumoto M."/>
            <person name="Matsuno A."/>
            <person name="Nakazaki N."/>
            <person name="Shimpo S."/>
            <person name="Takeuchi C."/>
            <person name="Yamada M."/>
            <person name="Tabata S."/>
        </authorList>
    </citation>
    <scope>NUCLEOTIDE SEQUENCE [LARGE SCALE GENOMIC DNA]</scope>
    <source>
        <strain>ATCC 29082 / PCC 7421</strain>
    </source>
</reference>
<dbReference type="EC" id="4.2.3.4" evidence="1"/>
<dbReference type="EMBL" id="BA000045">
    <property type="protein sequence ID" value="BAC90454.1"/>
    <property type="molecule type" value="Genomic_DNA"/>
</dbReference>
<dbReference type="RefSeq" id="NP_925459.1">
    <property type="nucleotide sequence ID" value="NC_005125.1"/>
</dbReference>
<dbReference type="RefSeq" id="WP_011142508.1">
    <property type="nucleotide sequence ID" value="NC_005125.1"/>
</dbReference>
<dbReference type="SMR" id="Q7NHM2"/>
<dbReference type="FunCoup" id="Q7NHM2">
    <property type="interactions" value="292"/>
</dbReference>
<dbReference type="STRING" id="251221.gene:10760012"/>
<dbReference type="EnsemblBacteria" id="BAC90454">
    <property type="protein sequence ID" value="BAC90454"/>
    <property type="gene ID" value="BAC90454"/>
</dbReference>
<dbReference type="KEGG" id="gvi:glr2513"/>
<dbReference type="PATRIC" id="fig|251221.4.peg.2551"/>
<dbReference type="eggNOG" id="COG0337">
    <property type="taxonomic scope" value="Bacteria"/>
</dbReference>
<dbReference type="HOGENOM" id="CLU_001201_0_2_3"/>
<dbReference type="InParanoid" id="Q7NHM2"/>
<dbReference type="OrthoDB" id="9806583at2"/>
<dbReference type="PhylomeDB" id="Q7NHM2"/>
<dbReference type="UniPathway" id="UPA00053">
    <property type="reaction ID" value="UER00085"/>
</dbReference>
<dbReference type="Proteomes" id="UP000000557">
    <property type="component" value="Chromosome"/>
</dbReference>
<dbReference type="GO" id="GO:0005737">
    <property type="term" value="C:cytoplasm"/>
    <property type="evidence" value="ECO:0007669"/>
    <property type="project" value="UniProtKB-SubCell"/>
</dbReference>
<dbReference type="GO" id="GO:0003856">
    <property type="term" value="F:3-dehydroquinate synthase activity"/>
    <property type="evidence" value="ECO:0000318"/>
    <property type="project" value="GO_Central"/>
</dbReference>
<dbReference type="GO" id="GO:0046872">
    <property type="term" value="F:metal ion binding"/>
    <property type="evidence" value="ECO:0007669"/>
    <property type="project" value="UniProtKB-KW"/>
</dbReference>
<dbReference type="GO" id="GO:0000166">
    <property type="term" value="F:nucleotide binding"/>
    <property type="evidence" value="ECO:0007669"/>
    <property type="project" value="UniProtKB-KW"/>
</dbReference>
<dbReference type="GO" id="GO:0008652">
    <property type="term" value="P:amino acid biosynthetic process"/>
    <property type="evidence" value="ECO:0007669"/>
    <property type="project" value="UniProtKB-KW"/>
</dbReference>
<dbReference type="GO" id="GO:0009073">
    <property type="term" value="P:aromatic amino acid family biosynthetic process"/>
    <property type="evidence" value="ECO:0000318"/>
    <property type="project" value="GO_Central"/>
</dbReference>
<dbReference type="GO" id="GO:0009423">
    <property type="term" value="P:chorismate biosynthetic process"/>
    <property type="evidence" value="ECO:0007669"/>
    <property type="project" value="UniProtKB-UniRule"/>
</dbReference>
<dbReference type="CDD" id="cd08195">
    <property type="entry name" value="DHQS"/>
    <property type="match status" value="1"/>
</dbReference>
<dbReference type="FunFam" id="3.40.50.1970:FF:000001">
    <property type="entry name" value="3-dehydroquinate synthase"/>
    <property type="match status" value="1"/>
</dbReference>
<dbReference type="Gene3D" id="3.40.50.1970">
    <property type="match status" value="1"/>
</dbReference>
<dbReference type="Gene3D" id="1.20.1090.10">
    <property type="entry name" value="Dehydroquinate synthase-like - alpha domain"/>
    <property type="match status" value="1"/>
</dbReference>
<dbReference type="HAMAP" id="MF_00110">
    <property type="entry name" value="DHQ_synthase"/>
    <property type="match status" value="1"/>
</dbReference>
<dbReference type="InterPro" id="IPR050071">
    <property type="entry name" value="Dehydroquinate_synthase"/>
</dbReference>
<dbReference type="InterPro" id="IPR016037">
    <property type="entry name" value="DHQ_synth_AroB"/>
</dbReference>
<dbReference type="InterPro" id="IPR030963">
    <property type="entry name" value="DHQ_synth_fam"/>
</dbReference>
<dbReference type="InterPro" id="IPR030960">
    <property type="entry name" value="DHQS/DOIS_N"/>
</dbReference>
<dbReference type="InterPro" id="IPR056179">
    <property type="entry name" value="DHQS_C"/>
</dbReference>
<dbReference type="NCBIfam" id="TIGR01357">
    <property type="entry name" value="aroB"/>
    <property type="match status" value="1"/>
</dbReference>
<dbReference type="PANTHER" id="PTHR43622">
    <property type="entry name" value="3-DEHYDROQUINATE SYNTHASE"/>
    <property type="match status" value="1"/>
</dbReference>
<dbReference type="PANTHER" id="PTHR43622:SF7">
    <property type="entry name" value="3-DEHYDROQUINATE SYNTHASE, CHLOROPLASTIC"/>
    <property type="match status" value="1"/>
</dbReference>
<dbReference type="Pfam" id="PF01761">
    <property type="entry name" value="DHQ_synthase"/>
    <property type="match status" value="1"/>
</dbReference>
<dbReference type="Pfam" id="PF24621">
    <property type="entry name" value="DHQS_C"/>
    <property type="match status" value="1"/>
</dbReference>
<dbReference type="PIRSF" id="PIRSF001455">
    <property type="entry name" value="DHQ_synth"/>
    <property type="match status" value="1"/>
</dbReference>
<dbReference type="SUPFAM" id="SSF56796">
    <property type="entry name" value="Dehydroquinate synthase-like"/>
    <property type="match status" value="1"/>
</dbReference>
<keyword id="KW-0028">Amino-acid biosynthesis</keyword>
<keyword id="KW-0057">Aromatic amino acid biosynthesis</keyword>
<keyword id="KW-0170">Cobalt</keyword>
<keyword id="KW-0963">Cytoplasm</keyword>
<keyword id="KW-0456">Lyase</keyword>
<keyword id="KW-0479">Metal-binding</keyword>
<keyword id="KW-0520">NAD</keyword>
<keyword id="KW-0547">Nucleotide-binding</keyword>
<keyword id="KW-1185">Reference proteome</keyword>
<keyword id="KW-0862">Zinc</keyword>
<accession>Q7NHM2</accession>
<name>AROB_GLOVI</name>
<sequence length="361" mass="39371">MIRIPVALPMDSYDICIDEGGLERLGEYLAELGKVNRALVVSNPVVLRHYGARVVRSLNAAGFETASVTVPAGERHKHLRSVERIYQAALEHRLERSSLIVALGGGVVGDMAGFAASTWLRGIRVAQVPTTLLAMVDAAIGGKTGVNHPLGKNLIGTFHQPCLVLIDPQVLGTLPPRETRAAMAEVIKYGVIWDGDLFKRLEQLPSLQRPDARTLTTLLVRSCQAKAEVVVRDEREGGLRAILNYGHTVGHALESATGYRRYLHGEGVALGMAAAGRVAVALDLWSPEELRRQEALIIKARLPVRWKSDIASEALLLRMQSDKKVEAGKVRFVLPEAIGRVHTGVEVPTEVLRRVLDTLRG</sequence>
<protein>
    <recommendedName>
        <fullName evidence="1">3-dehydroquinate synthase</fullName>
        <shortName evidence="1">DHQS</shortName>
        <ecNumber evidence="1">4.2.3.4</ecNumber>
    </recommendedName>
</protein>
<organism>
    <name type="scientific">Gloeobacter violaceus (strain ATCC 29082 / PCC 7421)</name>
    <dbReference type="NCBI Taxonomy" id="251221"/>
    <lineage>
        <taxon>Bacteria</taxon>
        <taxon>Bacillati</taxon>
        <taxon>Cyanobacteriota</taxon>
        <taxon>Cyanophyceae</taxon>
        <taxon>Gloeobacterales</taxon>
        <taxon>Gloeobacteraceae</taxon>
        <taxon>Gloeobacter</taxon>
    </lineage>
</organism>
<gene>
    <name evidence="1" type="primary">aroB</name>
    <name type="ordered locus">glr2513</name>
</gene>
<proteinExistence type="inferred from homology"/>